<name>ECSIT_XENLA</name>
<sequence>MRTLRFLLSARHLSPRAKGIPVLQTLGHKAQRPMTCSLHTSQPPGPPQTTSSAGSVAPYEDVFKKEQRNKSNFVEVLDLYCKRDTRRRGHVEIIETALRWMPEFGVEKDLEVYNKLLDVFPKEIFIPQNFIQRMFNHYPRQQECAIRVLEQMEHYGITPNKQTCFLLLQIFGDRSHPIKKYQRMMYWFPRFKYTNPFPVPAELPADPVELSRMCLHRIAADLDSRVAVHQMPYTEKCDDGKEQEHLHIVGIQSPSQVSLLAAHDPSTPVYVEGPFPLWLKKTCVYYYILRADPDPMENEEEIDNERSFYYPLSLDIQLDRDLGDDDSFDVDDVVEGPVFAMCMAGSGDERLLGKWIRGLQETNPILGQTPVVFRLNSGPQELSVPQEKEAQPKQEVEEEEREPERHRMEQ</sequence>
<dbReference type="EMBL" id="BC129631">
    <property type="protein sequence ID" value="AAI29632.1"/>
    <property type="molecule type" value="mRNA"/>
</dbReference>
<dbReference type="RefSeq" id="NP_001091354.1">
    <property type="nucleotide sequence ID" value="NM_001097885.1"/>
</dbReference>
<dbReference type="SMR" id="A2VD95"/>
<dbReference type="DNASU" id="100037194"/>
<dbReference type="GeneID" id="100037194"/>
<dbReference type="KEGG" id="xla:100037194"/>
<dbReference type="AGR" id="Xenbase:XB-GENE-866520"/>
<dbReference type="CTD" id="100037194"/>
<dbReference type="Xenbase" id="XB-GENE-866520">
    <property type="gene designation" value="ecsit.S"/>
</dbReference>
<dbReference type="OrthoDB" id="10064298at2759"/>
<dbReference type="Proteomes" id="UP000186698">
    <property type="component" value="Chromosome 3S"/>
</dbReference>
<dbReference type="Bgee" id="100037194">
    <property type="expression patterns" value="Expressed in muscle tissue and 19 other cell types or tissues"/>
</dbReference>
<dbReference type="GO" id="GO:0005737">
    <property type="term" value="C:cytoplasm"/>
    <property type="evidence" value="ECO:0000250"/>
    <property type="project" value="UniProtKB"/>
</dbReference>
<dbReference type="GO" id="GO:0005739">
    <property type="term" value="C:mitochondrion"/>
    <property type="evidence" value="ECO:0000250"/>
    <property type="project" value="UniProtKB"/>
</dbReference>
<dbReference type="GO" id="GO:0005634">
    <property type="term" value="C:nucleus"/>
    <property type="evidence" value="ECO:0000250"/>
    <property type="project" value="UniProtKB"/>
</dbReference>
<dbReference type="GO" id="GO:0007178">
    <property type="term" value="P:cell surface receptor protein serine/threonine kinase signaling pathway"/>
    <property type="evidence" value="ECO:0000318"/>
    <property type="project" value="GO_Central"/>
</dbReference>
<dbReference type="GO" id="GO:0045087">
    <property type="term" value="P:innate immune response"/>
    <property type="evidence" value="ECO:0000318"/>
    <property type="project" value="GO_Central"/>
</dbReference>
<dbReference type="GO" id="GO:0051341">
    <property type="term" value="P:regulation of oxidoreductase activity"/>
    <property type="evidence" value="ECO:0000250"/>
    <property type="project" value="UniProtKB"/>
</dbReference>
<dbReference type="GO" id="GO:0061635">
    <property type="term" value="P:regulation of protein complex stability"/>
    <property type="evidence" value="ECO:0000250"/>
    <property type="project" value="UniProtKB"/>
</dbReference>
<dbReference type="FunFam" id="1.25.40.10:FF:002660">
    <property type="entry name" value="Evolutionarily conserved signaling intermediate in Toll pathway, mitochondrial"/>
    <property type="match status" value="1"/>
</dbReference>
<dbReference type="Gene3D" id="1.25.40.10">
    <property type="entry name" value="Tetratricopeptide repeat domain"/>
    <property type="match status" value="1"/>
</dbReference>
<dbReference type="InterPro" id="IPR029342">
    <property type="entry name" value="ECIST_C"/>
</dbReference>
<dbReference type="InterPro" id="IPR010418">
    <property type="entry name" value="ECSIT"/>
</dbReference>
<dbReference type="InterPro" id="IPR046448">
    <property type="entry name" value="ECSIT_N"/>
</dbReference>
<dbReference type="InterPro" id="IPR011990">
    <property type="entry name" value="TPR-like_helical_dom_sf"/>
</dbReference>
<dbReference type="PANTHER" id="PTHR13113">
    <property type="entry name" value="ECSIT EVOLUTIONARILY CONSERVED SIGNALING INTERMEDIATE IN TOLL PATHWAYS"/>
    <property type="match status" value="1"/>
</dbReference>
<dbReference type="PANTHER" id="PTHR13113:SF1">
    <property type="entry name" value="EVOLUTIONARILY CONSERVED SIGNALING INTERMEDIATE IN TOLL PATHWAY, MITOCHONDRIAL"/>
    <property type="match status" value="1"/>
</dbReference>
<dbReference type="Pfam" id="PF14784">
    <property type="entry name" value="ECSIT_C"/>
    <property type="match status" value="1"/>
</dbReference>
<dbReference type="Pfam" id="PF06239">
    <property type="entry name" value="ECSIT_N"/>
    <property type="match status" value="1"/>
</dbReference>
<dbReference type="SMART" id="SM01284">
    <property type="entry name" value="ECSIT_Cterm"/>
    <property type="match status" value="1"/>
</dbReference>
<accession>A2VD95</accession>
<reference key="1">
    <citation type="submission" date="2006-12" db="EMBL/GenBank/DDBJ databases">
        <authorList>
            <consortium name="NIH - Xenopus Gene Collection (XGC) project"/>
        </authorList>
    </citation>
    <scope>NUCLEOTIDE SEQUENCE [LARGE SCALE MRNA]</scope>
    <source>
        <tissue>Forelimb</tissue>
        <tissue>Hind limb</tissue>
    </source>
</reference>
<feature type="transit peptide" description="Mitochondrion" evidence="2">
    <location>
        <begin position="1"/>
        <end position="33"/>
    </location>
</feature>
<feature type="chain" id="PRO_0000291990" description="Evolutionarily conserved signaling intermediate in Toll pathway, mitochondrial">
    <location>
        <begin position="34"/>
        <end position="410"/>
    </location>
</feature>
<feature type="region of interest" description="Disordered" evidence="3">
    <location>
        <begin position="35"/>
        <end position="56"/>
    </location>
</feature>
<feature type="region of interest" description="Disordered" evidence="3">
    <location>
        <begin position="377"/>
        <end position="410"/>
    </location>
</feature>
<feature type="compositionally biased region" description="Basic and acidic residues" evidence="3">
    <location>
        <begin position="386"/>
        <end position="395"/>
    </location>
</feature>
<protein>
    <recommendedName>
        <fullName>Evolutionarily conserved signaling intermediate in Toll pathway, mitochondrial</fullName>
    </recommendedName>
</protein>
<gene>
    <name type="primary">ecsit</name>
</gene>
<comment type="function">
    <text>Adapter protein of the Toll-like and IL-1 receptor signaling pathway that is involved in the activation of NF-kappa-B.</text>
</comment>
<comment type="function">
    <text evidence="1">Required for efficient assembly of mitochondrial NADH:ubiquinone oxidoreductase.</text>
</comment>
<comment type="subcellular location">
    <subcellularLocation>
        <location evidence="1">Cytoplasm</location>
    </subcellularLocation>
    <subcellularLocation>
        <location evidence="1">Nucleus</location>
    </subcellularLocation>
    <subcellularLocation>
        <location evidence="1">Mitochondrion</location>
    </subcellularLocation>
</comment>
<comment type="similarity">
    <text evidence="4">Belongs to the ECSIT family.</text>
</comment>
<evidence type="ECO:0000250" key="1"/>
<evidence type="ECO:0000255" key="2"/>
<evidence type="ECO:0000256" key="3">
    <source>
        <dbReference type="SAM" id="MobiDB-lite"/>
    </source>
</evidence>
<evidence type="ECO:0000305" key="4"/>
<keyword id="KW-0963">Cytoplasm</keyword>
<keyword id="KW-0391">Immunity</keyword>
<keyword id="KW-0399">Innate immunity</keyword>
<keyword id="KW-0496">Mitochondrion</keyword>
<keyword id="KW-0539">Nucleus</keyword>
<keyword id="KW-1185">Reference proteome</keyword>
<keyword id="KW-0809">Transit peptide</keyword>
<proteinExistence type="evidence at transcript level"/>
<organism>
    <name type="scientific">Xenopus laevis</name>
    <name type="common">African clawed frog</name>
    <dbReference type="NCBI Taxonomy" id="8355"/>
    <lineage>
        <taxon>Eukaryota</taxon>
        <taxon>Metazoa</taxon>
        <taxon>Chordata</taxon>
        <taxon>Craniata</taxon>
        <taxon>Vertebrata</taxon>
        <taxon>Euteleostomi</taxon>
        <taxon>Amphibia</taxon>
        <taxon>Batrachia</taxon>
        <taxon>Anura</taxon>
        <taxon>Pipoidea</taxon>
        <taxon>Pipidae</taxon>
        <taxon>Xenopodinae</taxon>
        <taxon>Xenopus</taxon>
        <taxon>Xenopus</taxon>
    </lineage>
</organism>